<name>METN_BARHE</name>
<gene>
    <name evidence="1" type="primary">metN</name>
    <name type="ordered locus">BH12920</name>
</gene>
<accession>Q6G2E2</accession>
<sequence length="344" mass="38046">MENPSLISLKKISRCFNTTTDICALDNLSLNIHAGEILGIIGRSGAGKSTLIRCLNGLERIDAGSIFFEGVNVSNLSETEWAPYRQRIGMIFQHFNLLSSQNILNNIALPLKLTGINKKQRHKRALELIELVGLCGKEYCYPAELSGGQKQRVGIARSLAANPKILLSDEATSALDPETTQSILELLADINKRLNLTIVLITHEMEVVRAIAHRVVVLNQGRIVEEGRVKDIFTSPQDDTTIAMLKLVTPQLPEKFAKNLKPRGQEAIIEINIAGEITQQPFLNLLEDEIGLRARILHGGIDTVQGETIGRLFLGLPAQNQEALKKAVQWLTEKGRYCEVLGYV</sequence>
<dbReference type="EC" id="7.4.2.11" evidence="1"/>
<dbReference type="EMBL" id="BX897699">
    <property type="protein sequence ID" value="CAF28066.1"/>
    <property type="molecule type" value="Genomic_DNA"/>
</dbReference>
<dbReference type="RefSeq" id="WP_011181105.1">
    <property type="nucleotide sequence ID" value="NZ_LRIJ02000001.1"/>
</dbReference>
<dbReference type="SMR" id="Q6G2E2"/>
<dbReference type="PaxDb" id="283166-BH12920"/>
<dbReference type="EnsemblBacteria" id="CAF28066">
    <property type="protein sequence ID" value="CAF28066"/>
    <property type="gene ID" value="BH12920"/>
</dbReference>
<dbReference type="KEGG" id="bhe:BH12920"/>
<dbReference type="eggNOG" id="COG1135">
    <property type="taxonomic scope" value="Bacteria"/>
</dbReference>
<dbReference type="OrthoDB" id="9802264at2"/>
<dbReference type="Proteomes" id="UP000000421">
    <property type="component" value="Chromosome"/>
</dbReference>
<dbReference type="GO" id="GO:0005886">
    <property type="term" value="C:plasma membrane"/>
    <property type="evidence" value="ECO:0007669"/>
    <property type="project" value="UniProtKB-SubCell"/>
</dbReference>
<dbReference type="GO" id="GO:0033232">
    <property type="term" value="F:ABC-type D-methionine transporter activity"/>
    <property type="evidence" value="ECO:0007669"/>
    <property type="project" value="UniProtKB-EC"/>
</dbReference>
<dbReference type="GO" id="GO:0005524">
    <property type="term" value="F:ATP binding"/>
    <property type="evidence" value="ECO:0007669"/>
    <property type="project" value="UniProtKB-KW"/>
</dbReference>
<dbReference type="GO" id="GO:0016887">
    <property type="term" value="F:ATP hydrolysis activity"/>
    <property type="evidence" value="ECO:0007669"/>
    <property type="project" value="InterPro"/>
</dbReference>
<dbReference type="CDD" id="cd03258">
    <property type="entry name" value="ABC_MetN_methionine_transporter"/>
    <property type="match status" value="1"/>
</dbReference>
<dbReference type="FunFam" id="3.40.50.300:FF:000056">
    <property type="entry name" value="Cell division ATP-binding protein FtsE"/>
    <property type="match status" value="1"/>
</dbReference>
<dbReference type="Gene3D" id="3.30.70.260">
    <property type="match status" value="1"/>
</dbReference>
<dbReference type="Gene3D" id="3.40.50.300">
    <property type="entry name" value="P-loop containing nucleotide triphosphate hydrolases"/>
    <property type="match status" value="1"/>
</dbReference>
<dbReference type="InterPro" id="IPR003593">
    <property type="entry name" value="AAA+_ATPase"/>
</dbReference>
<dbReference type="InterPro" id="IPR003439">
    <property type="entry name" value="ABC_transporter-like_ATP-bd"/>
</dbReference>
<dbReference type="InterPro" id="IPR017871">
    <property type="entry name" value="ABC_transporter-like_CS"/>
</dbReference>
<dbReference type="InterPro" id="IPR045865">
    <property type="entry name" value="ACT-like_dom_sf"/>
</dbReference>
<dbReference type="InterPro" id="IPR041701">
    <property type="entry name" value="MetN_ABC"/>
</dbReference>
<dbReference type="InterPro" id="IPR050086">
    <property type="entry name" value="MetN_ABC_transporter-like"/>
</dbReference>
<dbReference type="InterPro" id="IPR018449">
    <property type="entry name" value="NIL_domain"/>
</dbReference>
<dbReference type="InterPro" id="IPR027417">
    <property type="entry name" value="P-loop_NTPase"/>
</dbReference>
<dbReference type="PANTHER" id="PTHR43166">
    <property type="entry name" value="AMINO ACID IMPORT ATP-BINDING PROTEIN"/>
    <property type="match status" value="1"/>
</dbReference>
<dbReference type="PANTHER" id="PTHR43166:SF30">
    <property type="entry name" value="METHIONINE IMPORT ATP-BINDING PROTEIN METN"/>
    <property type="match status" value="1"/>
</dbReference>
<dbReference type="Pfam" id="PF00005">
    <property type="entry name" value="ABC_tran"/>
    <property type="match status" value="1"/>
</dbReference>
<dbReference type="Pfam" id="PF09383">
    <property type="entry name" value="NIL"/>
    <property type="match status" value="1"/>
</dbReference>
<dbReference type="SMART" id="SM00382">
    <property type="entry name" value="AAA"/>
    <property type="match status" value="1"/>
</dbReference>
<dbReference type="SMART" id="SM00930">
    <property type="entry name" value="NIL"/>
    <property type="match status" value="1"/>
</dbReference>
<dbReference type="SUPFAM" id="SSF55021">
    <property type="entry name" value="ACT-like"/>
    <property type="match status" value="1"/>
</dbReference>
<dbReference type="SUPFAM" id="SSF52540">
    <property type="entry name" value="P-loop containing nucleoside triphosphate hydrolases"/>
    <property type="match status" value="1"/>
</dbReference>
<dbReference type="PROSITE" id="PS00211">
    <property type="entry name" value="ABC_TRANSPORTER_1"/>
    <property type="match status" value="1"/>
</dbReference>
<dbReference type="PROSITE" id="PS50893">
    <property type="entry name" value="ABC_TRANSPORTER_2"/>
    <property type="match status" value="1"/>
</dbReference>
<dbReference type="PROSITE" id="PS51264">
    <property type="entry name" value="METN"/>
    <property type="match status" value="1"/>
</dbReference>
<comment type="function">
    <text evidence="1">Part of the ABC transporter complex MetNIQ involved in methionine import. Responsible for energy coupling to the transport system.</text>
</comment>
<comment type="catalytic activity">
    <reaction evidence="1">
        <text>L-methionine(out) + ATP + H2O = L-methionine(in) + ADP + phosphate + H(+)</text>
        <dbReference type="Rhea" id="RHEA:29779"/>
        <dbReference type="ChEBI" id="CHEBI:15377"/>
        <dbReference type="ChEBI" id="CHEBI:15378"/>
        <dbReference type="ChEBI" id="CHEBI:30616"/>
        <dbReference type="ChEBI" id="CHEBI:43474"/>
        <dbReference type="ChEBI" id="CHEBI:57844"/>
        <dbReference type="ChEBI" id="CHEBI:456216"/>
        <dbReference type="EC" id="7.4.2.11"/>
    </reaction>
</comment>
<comment type="catalytic activity">
    <reaction evidence="1">
        <text>D-methionine(out) + ATP + H2O = D-methionine(in) + ADP + phosphate + H(+)</text>
        <dbReference type="Rhea" id="RHEA:29767"/>
        <dbReference type="ChEBI" id="CHEBI:15377"/>
        <dbReference type="ChEBI" id="CHEBI:15378"/>
        <dbReference type="ChEBI" id="CHEBI:30616"/>
        <dbReference type="ChEBI" id="CHEBI:43474"/>
        <dbReference type="ChEBI" id="CHEBI:57932"/>
        <dbReference type="ChEBI" id="CHEBI:456216"/>
        <dbReference type="EC" id="7.4.2.11"/>
    </reaction>
</comment>
<comment type="subunit">
    <text evidence="1">The complex is composed of two ATP-binding proteins (MetN), two transmembrane proteins (MetI) and a solute-binding protein (MetQ).</text>
</comment>
<comment type="subcellular location">
    <subcellularLocation>
        <location evidence="1">Cell inner membrane</location>
        <topology evidence="1">Peripheral membrane protein</topology>
    </subcellularLocation>
</comment>
<comment type="similarity">
    <text evidence="1">Belongs to the ABC transporter superfamily. Methionine importer (TC 3.A.1.24) family.</text>
</comment>
<organism>
    <name type="scientific">Bartonella henselae (strain ATCC 49882 / DSM 28221 / CCUG 30454 / Houston 1)</name>
    <name type="common">Rochalimaea henselae</name>
    <dbReference type="NCBI Taxonomy" id="283166"/>
    <lineage>
        <taxon>Bacteria</taxon>
        <taxon>Pseudomonadati</taxon>
        <taxon>Pseudomonadota</taxon>
        <taxon>Alphaproteobacteria</taxon>
        <taxon>Hyphomicrobiales</taxon>
        <taxon>Bartonellaceae</taxon>
        <taxon>Bartonella</taxon>
    </lineage>
</organism>
<evidence type="ECO:0000255" key="1">
    <source>
        <dbReference type="HAMAP-Rule" id="MF_01719"/>
    </source>
</evidence>
<feature type="chain" id="PRO_0000270250" description="Methionine import ATP-binding protein MetN">
    <location>
        <begin position="1"/>
        <end position="344"/>
    </location>
</feature>
<feature type="domain" description="ABC transporter" evidence="1">
    <location>
        <begin position="7"/>
        <end position="245"/>
    </location>
</feature>
<feature type="binding site" evidence="1">
    <location>
        <begin position="42"/>
        <end position="49"/>
    </location>
    <ligand>
        <name>ATP</name>
        <dbReference type="ChEBI" id="CHEBI:30616"/>
    </ligand>
</feature>
<protein>
    <recommendedName>
        <fullName evidence="1">Methionine import ATP-binding protein MetN</fullName>
        <ecNumber evidence="1">7.4.2.11</ecNumber>
    </recommendedName>
</protein>
<keyword id="KW-0029">Amino-acid transport</keyword>
<keyword id="KW-0067">ATP-binding</keyword>
<keyword id="KW-0997">Cell inner membrane</keyword>
<keyword id="KW-1003">Cell membrane</keyword>
<keyword id="KW-0472">Membrane</keyword>
<keyword id="KW-0547">Nucleotide-binding</keyword>
<keyword id="KW-1278">Translocase</keyword>
<keyword id="KW-0813">Transport</keyword>
<proteinExistence type="inferred from homology"/>
<reference key="1">
    <citation type="journal article" date="2004" name="Proc. Natl. Acad. Sci. U.S.A.">
        <title>The louse-borne human pathogen Bartonella quintana is a genomic derivative of the zoonotic agent Bartonella henselae.</title>
        <authorList>
            <person name="Alsmark U.C.M."/>
            <person name="Frank A.C."/>
            <person name="Karlberg E.O."/>
            <person name="Legault B.-A."/>
            <person name="Ardell D.H."/>
            <person name="Canbaeck B."/>
            <person name="Eriksson A.-S."/>
            <person name="Naeslund A.K."/>
            <person name="Handley S.A."/>
            <person name="Huvet M."/>
            <person name="La Scola B."/>
            <person name="Holmberg M."/>
            <person name="Andersson S.G.E."/>
        </authorList>
    </citation>
    <scope>NUCLEOTIDE SEQUENCE [LARGE SCALE GENOMIC DNA]</scope>
    <source>
        <strain>ATCC 49882 / DSM 28221 / CCUG 30454 / Houston 1</strain>
    </source>
</reference>